<gene>
    <name type="primary">bam</name>
    <name type="ordered locus">bll0246</name>
</gene>
<organism>
    <name type="scientific">Bradyrhizobium diazoefficiens (strain JCM 10833 / BCRC 13528 / IAM 13628 / NBRC 14792 / USDA 110)</name>
    <dbReference type="NCBI Taxonomy" id="224911"/>
    <lineage>
        <taxon>Bacteria</taxon>
        <taxon>Pseudomonadati</taxon>
        <taxon>Pseudomonadota</taxon>
        <taxon>Alphaproteobacteria</taxon>
        <taxon>Hyphomicrobiales</taxon>
        <taxon>Nitrobacteraceae</taxon>
        <taxon>Bradyrhizobium</taxon>
    </lineage>
</organism>
<evidence type="ECO:0000250" key="1"/>
<evidence type="ECO:0000256" key="2">
    <source>
        <dbReference type="SAM" id="MobiDB-lite"/>
    </source>
</evidence>
<evidence type="ECO:0000305" key="3"/>
<protein>
    <recommendedName>
        <fullName>Indoleacetamide hydrolase</fullName>
        <shortName>IAH</shortName>
        <ecNumber>3.5.1.-</ecNumber>
    </recommendedName>
    <alternativeName>
        <fullName>Indole-3-acetamide hydrolase</fullName>
    </alternativeName>
</protein>
<name>HYIN_BRADU</name>
<reference key="1">
    <citation type="journal article" date="2002" name="DNA Res.">
        <title>Complete genomic sequence of nitrogen-fixing symbiotic bacterium Bradyrhizobium japonicum USDA110.</title>
        <authorList>
            <person name="Kaneko T."/>
            <person name="Nakamura Y."/>
            <person name="Sato S."/>
            <person name="Minamisawa K."/>
            <person name="Uchiumi T."/>
            <person name="Sasamoto S."/>
            <person name="Watanabe A."/>
            <person name="Idesawa K."/>
            <person name="Iriguchi M."/>
            <person name="Kawashima K."/>
            <person name="Kohara M."/>
            <person name="Matsumoto M."/>
            <person name="Shimpo S."/>
            <person name="Tsuruoka H."/>
            <person name="Wada T."/>
            <person name="Yamada M."/>
            <person name="Tabata S."/>
        </authorList>
    </citation>
    <scope>NUCLEOTIDE SEQUENCE [LARGE SCALE GENOMIC DNA]</scope>
    <source>
        <strain>JCM 10833 / BCRC 13528 / IAM 13628 / NBRC 14792 / USDA 110</strain>
    </source>
</reference>
<keyword id="KW-0073">Auxin biosynthesis</keyword>
<keyword id="KW-0378">Hydrolase</keyword>
<keyword id="KW-1185">Reference proteome</keyword>
<dbReference type="EC" id="3.5.1.-"/>
<dbReference type="EMBL" id="BA000040">
    <property type="protein sequence ID" value="BAC45511.1"/>
    <property type="molecule type" value="Genomic_DNA"/>
</dbReference>
<dbReference type="RefSeq" id="NP_766886.1">
    <property type="nucleotide sequence ID" value="NC_004463.1"/>
</dbReference>
<dbReference type="RefSeq" id="WP_011083078.1">
    <property type="nucleotide sequence ID" value="NC_004463.1"/>
</dbReference>
<dbReference type="SMR" id="P59385"/>
<dbReference type="STRING" id="224911.AAV28_40475"/>
<dbReference type="EnsemblBacteria" id="BAC45511">
    <property type="protein sequence ID" value="BAC45511"/>
    <property type="gene ID" value="BAC45511"/>
</dbReference>
<dbReference type="GeneID" id="46495397"/>
<dbReference type="KEGG" id="bja:bll0246"/>
<dbReference type="PATRIC" id="fig|224911.44.peg.8766"/>
<dbReference type="eggNOG" id="COG0154">
    <property type="taxonomic scope" value="Bacteria"/>
</dbReference>
<dbReference type="HOGENOM" id="CLU_009600_0_4_5"/>
<dbReference type="InParanoid" id="P59385"/>
<dbReference type="OrthoDB" id="9814821at2"/>
<dbReference type="PhylomeDB" id="P59385"/>
<dbReference type="UniPathway" id="UPA00151"/>
<dbReference type="Proteomes" id="UP000002526">
    <property type="component" value="Chromosome"/>
</dbReference>
<dbReference type="GO" id="GO:0016787">
    <property type="term" value="F:hydrolase activity"/>
    <property type="evidence" value="ECO:0007669"/>
    <property type="project" value="UniProtKB-KW"/>
</dbReference>
<dbReference type="GO" id="GO:0009851">
    <property type="term" value="P:auxin biosynthetic process"/>
    <property type="evidence" value="ECO:0007669"/>
    <property type="project" value="UniProtKB-UniPathway"/>
</dbReference>
<dbReference type="Gene3D" id="3.90.1300.10">
    <property type="entry name" value="Amidase signature (AS) domain"/>
    <property type="match status" value="1"/>
</dbReference>
<dbReference type="InterPro" id="IPR000120">
    <property type="entry name" value="Amidase"/>
</dbReference>
<dbReference type="InterPro" id="IPR020556">
    <property type="entry name" value="Amidase_CS"/>
</dbReference>
<dbReference type="InterPro" id="IPR023631">
    <property type="entry name" value="Amidase_dom"/>
</dbReference>
<dbReference type="InterPro" id="IPR036928">
    <property type="entry name" value="AS_sf"/>
</dbReference>
<dbReference type="NCBIfam" id="NF005687">
    <property type="entry name" value="PRK07487.1"/>
    <property type="match status" value="1"/>
</dbReference>
<dbReference type="PANTHER" id="PTHR11895:SF7">
    <property type="entry name" value="GLUTAMYL-TRNA(GLN) AMIDOTRANSFERASE SUBUNIT A, MITOCHONDRIAL"/>
    <property type="match status" value="1"/>
</dbReference>
<dbReference type="PANTHER" id="PTHR11895">
    <property type="entry name" value="TRANSAMIDASE"/>
    <property type="match status" value="1"/>
</dbReference>
<dbReference type="Pfam" id="PF01425">
    <property type="entry name" value="Amidase"/>
    <property type="match status" value="1"/>
</dbReference>
<dbReference type="PIRSF" id="PIRSF001221">
    <property type="entry name" value="Amidase_fungi"/>
    <property type="match status" value="1"/>
</dbReference>
<dbReference type="SUPFAM" id="SSF75304">
    <property type="entry name" value="Amidase signature (AS) enzymes"/>
    <property type="match status" value="1"/>
</dbReference>
<dbReference type="PROSITE" id="PS00571">
    <property type="entry name" value="AMIDASES"/>
    <property type="match status" value="1"/>
</dbReference>
<proteinExistence type="inferred from homology"/>
<sequence length="524" mass="56011">MAKKTASKKKSVSRKVTKTSSKKATARKGAVAKAAKKSVKKAAPRKSATARRPKGPVWQWSAVDTAAAIRSGAISAVETVEAHLDRMRAVNPRLNAVVVDLSKEALKAAHAADKQRAKGGELGLLHGVPITIKENVDYEGRPNFNGVPANKDYIAPSDAPVVRNLKKAGAIVIGLTNTPEFSFRGFTDNPLHGLTLNPWDPDITCGGSSGGAGSAVAAGIGTIAHGNDIGGSLRWPAHCNGVATIKPTQGRIPAFNGSATAERPMLAHLMSAQGPLARHVADVRLALEVMSQRDPRDPWWVPAPLVGPKPKGPIKVALAKIPDDMDVDPAVAAALRRAADHLERSGYRVSEVEVPDINGVWQTWCDIITNETMVMQEAAMLKVTSEDFHNAWNGMKAKANVLDLKAWMQATAARNGHIRAWQLFFEDYPVVLAPTTVSPTPGPRDDTISAERVQEVFWGGIRFISAINVLGLPGAVVPVALHEGKPIGVQLITGRYREDLALDAAAAIENRAGVLAHRLWETMD</sequence>
<accession>P59385</accession>
<feature type="chain" id="PRO_0000105246" description="Indoleacetamide hydrolase">
    <location>
        <begin position="1"/>
        <end position="524"/>
    </location>
</feature>
<feature type="region of interest" description="Disordered" evidence="2">
    <location>
        <begin position="1"/>
        <end position="56"/>
    </location>
</feature>
<feature type="compositionally biased region" description="Basic residues" evidence="2">
    <location>
        <begin position="1"/>
        <end position="26"/>
    </location>
</feature>
<feature type="compositionally biased region" description="Basic residues" evidence="2">
    <location>
        <begin position="34"/>
        <end position="54"/>
    </location>
</feature>
<feature type="active site" description="Charge relay system" evidence="1">
    <location>
        <position position="133"/>
    </location>
</feature>
<feature type="active site" description="Charge relay system" evidence="1">
    <location>
        <position position="208"/>
    </location>
</feature>
<feature type="active site" description="Acyl-ester intermediate" evidence="1">
    <location>
        <position position="232"/>
    </location>
</feature>
<comment type="function">
    <text evidence="1">Hydrolyzes indole-3-acetamide (IAM) into indole-3-acetic acid (IAA).</text>
</comment>
<comment type="pathway">
    <text>Plant hormone metabolism; auxin biosynthesis.</text>
</comment>
<comment type="similarity">
    <text evidence="3">Belongs to the amidase family.</text>
</comment>